<feature type="signal peptide" evidence="3">
    <location>
        <begin position="1"/>
        <end position="20"/>
    </location>
</feature>
<feature type="chain" id="PRO_0000020616" description="Auxin-binding protein T92">
    <location>
        <begin position="21"/>
        <end position="187"/>
    </location>
</feature>
<feature type="short sequence motif" description="Prevents secretion from ER" evidence="3">
    <location>
        <begin position="184"/>
        <end position="187"/>
    </location>
</feature>
<feature type="binding site" evidence="2">
    <location>
        <position position="78"/>
    </location>
    <ligand>
        <name>Zn(2+)</name>
        <dbReference type="ChEBI" id="CHEBI:29105"/>
    </ligand>
</feature>
<feature type="binding site" evidence="2">
    <location>
        <position position="80"/>
    </location>
    <ligand>
        <name>Zn(2+)</name>
        <dbReference type="ChEBI" id="CHEBI:29105"/>
    </ligand>
</feature>
<feature type="binding site" evidence="2">
    <location>
        <position position="84"/>
    </location>
    <ligand>
        <name>Zn(2+)</name>
        <dbReference type="ChEBI" id="CHEBI:29105"/>
    </ligand>
</feature>
<feature type="binding site" evidence="2">
    <location>
        <position position="128"/>
    </location>
    <ligand>
        <name>Zn(2+)</name>
        <dbReference type="ChEBI" id="CHEBI:29105"/>
    </ligand>
</feature>
<feature type="glycosylation site" description="N-linked (GlcNAc...) asparagine" evidence="2">
    <location>
        <position position="117"/>
    </location>
</feature>
<feature type="disulfide bond" evidence="2">
    <location>
        <begin position="22"/>
        <end position="177"/>
    </location>
</feature>
<proteinExistence type="inferred from homology"/>
<gene>
    <name type="primary">T92</name>
</gene>
<dbReference type="EMBL" id="X70903">
    <property type="protein sequence ID" value="CAA50260.1"/>
    <property type="molecule type" value="Genomic_DNA"/>
</dbReference>
<dbReference type="PIR" id="S31837">
    <property type="entry name" value="S31837"/>
</dbReference>
<dbReference type="SMR" id="P33491"/>
<dbReference type="STRING" id="4097.P33491"/>
<dbReference type="GlyCosmos" id="P33491">
    <property type="glycosylation" value="1 site, No reported glycans"/>
</dbReference>
<dbReference type="PaxDb" id="4097-P33491"/>
<dbReference type="Proteomes" id="UP000084051">
    <property type="component" value="Unplaced"/>
</dbReference>
<dbReference type="GO" id="GO:0005788">
    <property type="term" value="C:endoplasmic reticulum lumen"/>
    <property type="evidence" value="ECO:0007669"/>
    <property type="project" value="UniProtKB-SubCell"/>
</dbReference>
<dbReference type="GO" id="GO:0010011">
    <property type="term" value="F:auxin binding"/>
    <property type="evidence" value="ECO:0000250"/>
    <property type="project" value="UniProtKB"/>
</dbReference>
<dbReference type="GO" id="GO:0008270">
    <property type="term" value="F:zinc ion binding"/>
    <property type="evidence" value="ECO:0000250"/>
    <property type="project" value="UniProtKB"/>
</dbReference>
<dbReference type="GO" id="GO:0009734">
    <property type="term" value="P:auxin-activated signaling pathway"/>
    <property type="evidence" value="ECO:0007669"/>
    <property type="project" value="UniProtKB-KW"/>
</dbReference>
<dbReference type="GO" id="GO:0000911">
    <property type="term" value="P:cytokinesis by cell plate formation"/>
    <property type="evidence" value="ECO:0000318"/>
    <property type="project" value="GO_Central"/>
</dbReference>
<dbReference type="GO" id="GO:0051781">
    <property type="term" value="P:positive regulation of cell division"/>
    <property type="evidence" value="ECO:0000318"/>
    <property type="project" value="GO_Central"/>
</dbReference>
<dbReference type="GO" id="GO:0045793">
    <property type="term" value="P:positive regulation of cell size"/>
    <property type="evidence" value="ECO:0000318"/>
    <property type="project" value="GO_Central"/>
</dbReference>
<dbReference type="GO" id="GO:0032877">
    <property type="term" value="P:positive regulation of DNA endoreduplication"/>
    <property type="evidence" value="ECO:0000318"/>
    <property type="project" value="GO_Central"/>
</dbReference>
<dbReference type="GO" id="GO:0009826">
    <property type="term" value="P:unidimensional cell growth"/>
    <property type="evidence" value="ECO:0000318"/>
    <property type="project" value="GO_Central"/>
</dbReference>
<dbReference type="CDD" id="cd02220">
    <property type="entry name" value="cupin_ABP1"/>
    <property type="match status" value="1"/>
</dbReference>
<dbReference type="FunFam" id="2.60.120.10:FF:000080">
    <property type="entry name" value="Auxin-binding protein 1"/>
    <property type="match status" value="1"/>
</dbReference>
<dbReference type="Gene3D" id="2.60.120.10">
    <property type="entry name" value="Jelly Rolls"/>
    <property type="match status" value="1"/>
</dbReference>
<dbReference type="InterPro" id="IPR000526">
    <property type="entry name" value="Auxin-bd"/>
</dbReference>
<dbReference type="InterPro" id="IPR014710">
    <property type="entry name" value="RmlC-like_jellyroll"/>
</dbReference>
<dbReference type="InterPro" id="IPR011051">
    <property type="entry name" value="RmlC_Cupin_sf"/>
</dbReference>
<dbReference type="PANTHER" id="PTHR37236">
    <property type="entry name" value="AUXIN-BINDING PROTEIN 1"/>
    <property type="match status" value="1"/>
</dbReference>
<dbReference type="PANTHER" id="PTHR37236:SF1">
    <property type="entry name" value="AUXIN-BINDING PROTEIN 1"/>
    <property type="match status" value="1"/>
</dbReference>
<dbReference type="Pfam" id="PF02041">
    <property type="entry name" value="Auxin_BP"/>
    <property type="match status" value="1"/>
</dbReference>
<dbReference type="PRINTS" id="PR00655">
    <property type="entry name" value="AUXINBINDNGP"/>
</dbReference>
<dbReference type="SUPFAM" id="SSF51182">
    <property type="entry name" value="RmlC-like cupins"/>
    <property type="match status" value="1"/>
</dbReference>
<dbReference type="PROSITE" id="PS00014">
    <property type="entry name" value="ER_TARGET"/>
    <property type="match status" value="1"/>
</dbReference>
<accession>P33491</accession>
<evidence type="ECO:0000250" key="1"/>
<evidence type="ECO:0000250" key="2">
    <source>
        <dbReference type="UniProtKB" id="P13689"/>
    </source>
</evidence>
<evidence type="ECO:0000255" key="3"/>
<reference key="1">
    <citation type="journal article" date="1998" name="Plant Mol. Biol.">
        <title>Cloning and expression of two genes encoding auxin-binding proteins from tobacco.</title>
        <authorList>
            <person name="Watanabe S."/>
            <person name="Shimomura S."/>
        </authorList>
    </citation>
    <scope>NUCLEOTIDE SEQUENCE [GENOMIC DNA]</scope>
    <source>
        <strain>cv. NK 326</strain>
    </source>
</reference>
<protein>
    <recommendedName>
        <fullName>Auxin-binding protein T92</fullName>
        <shortName>ABP</shortName>
    </recommendedName>
</protein>
<comment type="function">
    <text>This is probably a receptor for the plant hormone auxin.</text>
</comment>
<comment type="subunit">
    <text evidence="1">Homodimer.</text>
</comment>
<comment type="subcellular location">
    <subcellularLocation>
        <location>Endoplasmic reticulum lumen</location>
    </subcellularLocation>
</comment>
<organism>
    <name type="scientific">Nicotiana tabacum</name>
    <name type="common">Common tobacco</name>
    <dbReference type="NCBI Taxonomy" id="4097"/>
    <lineage>
        <taxon>Eukaryota</taxon>
        <taxon>Viridiplantae</taxon>
        <taxon>Streptophyta</taxon>
        <taxon>Embryophyta</taxon>
        <taxon>Tracheophyta</taxon>
        <taxon>Spermatophyta</taxon>
        <taxon>Magnoliopsida</taxon>
        <taxon>eudicotyledons</taxon>
        <taxon>Gunneridae</taxon>
        <taxon>Pentapetalae</taxon>
        <taxon>asterids</taxon>
        <taxon>lamiids</taxon>
        <taxon>Solanales</taxon>
        <taxon>Solanaceae</taxon>
        <taxon>Nicotianoideae</taxon>
        <taxon>Nicotianeae</taxon>
        <taxon>Nicotiana</taxon>
    </lineage>
</organism>
<keyword id="KW-0927">Auxin signaling pathway</keyword>
<keyword id="KW-1015">Disulfide bond</keyword>
<keyword id="KW-0256">Endoplasmic reticulum</keyword>
<keyword id="KW-0325">Glycoprotein</keyword>
<keyword id="KW-0479">Metal-binding</keyword>
<keyword id="KW-0675">Receptor</keyword>
<keyword id="KW-1185">Reference proteome</keyword>
<keyword id="KW-0732">Signal</keyword>
<keyword id="KW-0862">Zinc</keyword>
<sequence length="187" mass="21453">MARHIIILVAVFWFATAEASHCSINGLPLVRNISELPQENYGRSGLSHTTIAGSVLHGMKEIEVWLQTFAPGFRTPIHRHSCEEIFIVLKGQGTLYLTPSSHSKYPGNPQEFHIFPNSTFHIPVNDVHQVWNTGEQEDLQVLDVISRPPVKVFMYDDWSMPHTAAKLKFPYYWDEECYQTTSRKDEL</sequence>
<name>ABP2_TOBAC</name>